<geneLocation type="chloroplast"/>
<keyword id="KW-0150">Chloroplast</keyword>
<keyword id="KW-0934">Plastid</keyword>
<keyword id="KW-0687">Ribonucleoprotein</keyword>
<keyword id="KW-0689">Ribosomal protein</keyword>
<keyword id="KW-0694">RNA-binding</keyword>
<keyword id="KW-0699">rRNA-binding</keyword>
<gene>
    <name type="primary">rpl22</name>
</gene>
<organism>
    <name type="scientific">Fagopyrum esculentum subsp. ancestrale</name>
    <name type="common">Wild buckwheat</name>
    <dbReference type="NCBI Taxonomy" id="180217"/>
    <lineage>
        <taxon>Eukaryota</taxon>
        <taxon>Viridiplantae</taxon>
        <taxon>Streptophyta</taxon>
        <taxon>Embryophyta</taxon>
        <taxon>Tracheophyta</taxon>
        <taxon>Spermatophyta</taxon>
        <taxon>Magnoliopsida</taxon>
        <taxon>eudicotyledons</taxon>
        <taxon>Gunneridae</taxon>
        <taxon>Pentapetalae</taxon>
        <taxon>Caryophyllales</taxon>
        <taxon>Polygonaceae</taxon>
        <taxon>Polygonoideae</taxon>
        <taxon>Fagopyreae</taxon>
        <taxon>Fagopyrum</taxon>
    </lineage>
</organism>
<evidence type="ECO:0000250" key="1"/>
<evidence type="ECO:0000305" key="2"/>
<feature type="chain" id="PRO_0000354573" description="Large ribosomal subunit protein uL22c">
    <location>
        <begin position="1"/>
        <end position="150"/>
    </location>
</feature>
<reference key="1">
    <citation type="journal article" date="2008" name="BMC Plant Biol.">
        <title>Comparative chloroplast genomics and phylogenetics of Fagopyrum esculentum ssp. ancestrale - a wild ancestor of cultivated buckwheat.</title>
        <authorList>
            <person name="Logacheva M.D."/>
            <person name="Samigullin T.H."/>
            <person name="Dhingra A."/>
            <person name="Penin A.A."/>
        </authorList>
    </citation>
    <scope>NUCLEOTIDE SEQUENCE [LARGE SCALE GENOMIC DNA]</scope>
</reference>
<proteinExistence type="inferred from homology"/>
<comment type="function">
    <text evidence="1">This protein binds specifically to 23S rRNA.</text>
</comment>
<comment type="function">
    <text evidence="1">The globular domain of the protein is located near the polypeptide exit tunnel on the outside of the subunit, while an extended beta-hairpin is found that lines the wall of the exit tunnel in the center of the 70S ribosome.</text>
</comment>
<comment type="subunit">
    <text evidence="1">Part of the 50S ribosomal subunit.</text>
</comment>
<comment type="subcellular location">
    <subcellularLocation>
        <location>Plastid</location>
        <location>Chloroplast</location>
    </subcellularLocation>
</comment>
<comment type="similarity">
    <text evidence="2">Belongs to the universal ribosomal protein uL22 family.</text>
</comment>
<dbReference type="EMBL" id="EU254477">
    <property type="protein sequence ID" value="ABY79772.1"/>
    <property type="molecule type" value="Genomic_DNA"/>
</dbReference>
<dbReference type="RefSeq" id="YP_001936557.1">
    <property type="nucleotide sequence ID" value="NC_010776.1"/>
</dbReference>
<dbReference type="SMR" id="B2XWR3"/>
<dbReference type="GeneID" id="6336055"/>
<dbReference type="GO" id="GO:0009507">
    <property type="term" value="C:chloroplast"/>
    <property type="evidence" value="ECO:0007669"/>
    <property type="project" value="UniProtKB-SubCell"/>
</dbReference>
<dbReference type="GO" id="GO:0015934">
    <property type="term" value="C:large ribosomal subunit"/>
    <property type="evidence" value="ECO:0007669"/>
    <property type="project" value="InterPro"/>
</dbReference>
<dbReference type="GO" id="GO:0019843">
    <property type="term" value="F:rRNA binding"/>
    <property type="evidence" value="ECO:0007669"/>
    <property type="project" value="UniProtKB-UniRule"/>
</dbReference>
<dbReference type="GO" id="GO:0003735">
    <property type="term" value="F:structural constituent of ribosome"/>
    <property type="evidence" value="ECO:0007669"/>
    <property type="project" value="InterPro"/>
</dbReference>
<dbReference type="GO" id="GO:0006412">
    <property type="term" value="P:translation"/>
    <property type="evidence" value="ECO:0007669"/>
    <property type="project" value="UniProtKB-UniRule"/>
</dbReference>
<dbReference type="CDD" id="cd00336">
    <property type="entry name" value="Ribosomal_L22"/>
    <property type="match status" value="1"/>
</dbReference>
<dbReference type="FunFam" id="3.90.470.10:FF:000006">
    <property type="entry name" value="50S ribosomal protein L22, chloroplastic"/>
    <property type="match status" value="1"/>
</dbReference>
<dbReference type="Gene3D" id="3.90.470.10">
    <property type="entry name" value="Ribosomal protein L22/L17"/>
    <property type="match status" value="1"/>
</dbReference>
<dbReference type="HAMAP" id="MF_01331_B">
    <property type="entry name" value="Ribosomal_uL22_B"/>
    <property type="match status" value="1"/>
</dbReference>
<dbReference type="InterPro" id="IPR001063">
    <property type="entry name" value="Ribosomal_uL22"/>
</dbReference>
<dbReference type="InterPro" id="IPR005727">
    <property type="entry name" value="Ribosomal_uL22_bac/chlpt-type"/>
</dbReference>
<dbReference type="InterPro" id="IPR047867">
    <property type="entry name" value="Ribosomal_uL22_bac/org-type"/>
</dbReference>
<dbReference type="InterPro" id="IPR018260">
    <property type="entry name" value="Ribosomal_uL22_CS"/>
</dbReference>
<dbReference type="InterPro" id="IPR036394">
    <property type="entry name" value="Ribosomal_uL22_sf"/>
</dbReference>
<dbReference type="NCBIfam" id="TIGR01044">
    <property type="entry name" value="rplV_bact"/>
    <property type="match status" value="1"/>
</dbReference>
<dbReference type="PANTHER" id="PTHR13501">
    <property type="entry name" value="CHLOROPLAST 50S RIBOSOMAL PROTEIN L22-RELATED"/>
    <property type="match status" value="1"/>
</dbReference>
<dbReference type="PANTHER" id="PTHR13501:SF10">
    <property type="entry name" value="LARGE RIBOSOMAL SUBUNIT PROTEIN UL22M"/>
    <property type="match status" value="1"/>
</dbReference>
<dbReference type="Pfam" id="PF00237">
    <property type="entry name" value="Ribosomal_L22"/>
    <property type="match status" value="1"/>
</dbReference>
<dbReference type="SUPFAM" id="SSF54843">
    <property type="entry name" value="Ribosomal protein L22"/>
    <property type="match status" value="1"/>
</dbReference>
<dbReference type="PROSITE" id="PS00464">
    <property type="entry name" value="RIBOSOMAL_L22"/>
    <property type="match status" value="1"/>
</dbReference>
<name>RK22_FAGEA</name>
<protein>
    <recommendedName>
        <fullName evidence="2">Large ribosomal subunit protein uL22c</fullName>
    </recommendedName>
    <alternativeName>
        <fullName>50S ribosomal protein L22, chloroplastic</fullName>
    </alternativeName>
</protein>
<sequence>MRKKKKSLTEVSALGQYIPMSVHKARRVIDQIRGRSYKETLMILELMPYRACYPIFKIIYSAAANAKHNKGFEKEDLLVWKAEVNKGPTRKKLKPRARGRSYLIKKPTCHISVVLKDISYYEAYETLYNREKYLPSNFRLKSSGAIWDKK</sequence>
<accession>B2XWR3</accession>